<comment type="function">
    <text evidence="1">Positively regulates the activity of the minus-end directed microtubule motor protein dynein. Plays a central role in positioning the mitotic spindle at the bud neck during cell division. Targets cytoplasmic dynein to microtubule plus ends, thereby promoting dynein-mediated microtubule sliding along the bud cortex and consequently the movement of the mitotic spindle to the bud neck.</text>
</comment>
<comment type="subunit">
    <text evidence="1">Self-associates. Interacts with NDL1 and dynein.</text>
</comment>
<comment type="subcellular location">
    <subcellularLocation>
        <location evidence="1">Cytoplasm</location>
        <location evidence="1">Cytoskeleton</location>
    </subcellularLocation>
    <subcellularLocation>
        <location evidence="1">Cytoplasm</location>
        <location evidence="1">Cytoskeleton</location>
        <location evidence="1">Spindle pole</location>
    </subcellularLocation>
    <text evidence="1">Localizes to the plus ends of microtubules and the mitotic spindle poles.</text>
</comment>
<comment type="domain">
    <text evidence="1">Dimerization mediated by the LisH domain may be required to activate dynein.</text>
</comment>
<comment type="similarity">
    <text evidence="1">Belongs to the WD repeat LIS1/nudF family.</text>
</comment>
<organism>
    <name type="scientific">Cryptococcus neoformans var. neoformans serotype D (strain B-3501A)</name>
    <name type="common">Filobasidiella neoformans</name>
    <dbReference type="NCBI Taxonomy" id="283643"/>
    <lineage>
        <taxon>Eukaryota</taxon>
        <taxon>Fungi</taxon>
        <taxon>Dikarya</taxon>
        <taxon>Basidiomycota</taxon>
        <taxon>Agaricomycotina</taxon>
        <taxon>Tremellomycetes</taxon>
        <taxon>Tremellales</taxon>
        <taxon>Cryptococcaceae</taxon>
        <taxon>Cryptococcus</taxon>
        <taxon>Cryptococcus neoformans species complex</taxon>
    </lineage>
</organism>
<protein>
    <recommendedName>
        <fullName evidence="1">Nuclear distribution protein PAC1</fullName>
    </recommendedName>
    <alternativeName>
        <fullName evidence="1">Lissencephaly-1 homolog</fullName>
        <shortName evidence="1">LIS-1</shortName>
    </alternativeName>
    <alternativeName>
        <fullName evidence="1">nudF homolog</fullName>
    </alternativeName>
</protein>
<dbReference type="EMBL" id="AAEY01000020">
    <property type="protein sequence ID" value="EAL21321.1"/>
    <property type="molecule type" value="Genomic_DNA"/>
</dbReference>
<dbReference type="RefSeq" id="XP_775968.1">
    <property type="nucleotide sequence ID" value="XM_770875.1"/>
</dbReference>
<dbReference type="SMR" id="P0CS43"/>
<dbReference type="EnsemblFungi" id="AAW43166">
    <property type="protein sequence ID" value="AAW43166"/>
    <property type="gene ID" value="CND02590"/>
</dbReference>
<dbReference type="GeneID" id="4935764"/>
<dbReference type="KEGG" id="cnb:CNBD3750"/>
<dbReference type="VEuPathDB" id="FungiDB:CNBD3750"/>
<dbReference type="HOGENOM" id="CLU_000288_57_15_1"/>
<dbReference type="OrthoDB" id="2722at5206"/>
<dbReference type="GO" id="GO:0005737">
    <property type="term" value="C:cytoplasm"/>
    <property type="evidence" value="ECO:0007669"/>
    <property type="project" value="UniProtKB-UniRule"/>
</dbReference>
<dbReference type="GO" id="GO:0005874">
    <property type="term" value="C:microtubule"/>
    <property type="evidence" value="ECO:0007669"/>
    <property type="project" value="UniProtKB-KW"/>
</dbReference>
<dbReference type="GO" id="GO:0005875">
    <property type="term" value="C:microtubule associated complex"/>
    <property type="evidence" value="ECO:0007669"/>
    <property type="project" value="UniProtKB-UniRule"/>
</dbReference>
<dbReference type="GO" id="GO:0000922">
    <property type="term" value="C:spindle pole"/>
    <property type="evidence" value="ECO:0007669"/>
    <property type="project" value="UniProtKB-SubCell"/>
</dbReference>
<dbReference type="GO" id="GO:0070840">
    <property type="term" value="F:dynein complex binding"/>
    <property type="evidence" value="ECO:0007669"/>
    <property type="project" value="UniProtKB-UniRule"/>
</dbReference>
<dbReference type="GO" id="GO:0051301">
    <property type="term" value="P:cell division"/>
    <property type="evidence" value="ECO:0007669"/>
    <property type="project" value="UniProtKB-KW"/>
</dbReference>
<dbReference type="GO" id="GO:0000132">
    <property type="term" value="P:establishment of mitotic spindle orientation"/>
    <property type="evidence" value="ECO:0007669"/>
    <property type="project" value="UniProtKB-UniRule"/>
</dbReference>
<dbReference type="GO" id="GO:0051012">
    <property type="term" value="P:microtubule sliding"/>
    <property type="evidence" value="ECO:0007669"/>
    <property type="project" value="UniProtKB-UniRule"/>
</dbReference>
<dbReference type="CDD" id="cd00200">
    <property type="entry name" value="WD40"/>
    <property type="match status" value="1"/>
</dbReference>
<dbReference type="FunFam" id="2.130.10.10:FF:000342">
    <property type="entry name" value="Nuclear distribution protein PAC1"/>
    <property type="match status" value="1"/>
</dbReference>
<dbReference type="FunFam" id="1.20.960.30:FF:000002">
    <property type="entry name" value="Platelet-activating factor acetylhydrolase ib"/>
    <property type="match status" value="1"/>
</dbReference>
<dbReference type="Gene3D" id="1.20.960.30">
    <property type="match status" value="1"/>
</dbReference>
<dbReference type="Gene3D" id="2.130.10.10">
    <property type="entry name" value="YVTN repeat-like/Quinoprotein amine dehydrogenase"/>
    <property type="match status" value="1"/>
</dbReference>
<dbReference type="HAMAP" id="MF_03141">
    <property type="entry name" value="lis1"/>
    <property type="match status" value="1"/>
</dbReference>
<dbReference type="InterPro" id="IPR017252">
    <property type="entry name" value="Dynein_regulator_LIS1"/>
</dbReference>
<dbReference type="InterPro" id="IPR020472">
    <property type="entry name" value="G-protein_beta_WD-40_rep"/>
</dbReference>
<dbReference type="InterPro" id="IPR037190">
    <property type="entry name" value="LIS1_N"/>
</dbReference>
<dbReference type="InterPro" id="IPR006594">
    <property type="entry name" value="LisH"/>
</dbReference>
<dbReference type="InterPro" id="IPR056795">
    <property type="entry name" value="PAC1-like_LisH-like_dom"/>
</dbReference>
<dbReference type="InterPro" id="IPR015943">
    <property type="entry name" value="WD40/YVTN_repeat-like_dom_sf"/>
</dbReference>
<dbReference type="InterPro" id="IPR019775">
    <property type="entry name" value="WD40_repeat_CS"/>
</dbReference>
<dbReference type="InterPro" id="IPR036322">
    <property type="entry name" value="WD40_repeat_dom_sf"/>
</dbReference>
<dbReference type="InterPro" id="IPR001680">
    <property type="entry name" value="WD40_rpt"/>
</dbReference>
<dbReference type="PANTHER" id="PTHR19848:SF8">
    <property type="entry name" value="F-BOX AND WD REPEAT DOMAIN CONTAINING 7"/>
    <property type="match status" value="1"/>
</dbReference>
<dbReference type="PANTHER" id="PTHR19848">
    <property type="entry name" value="WD40 REPEAT PROTEIN"/>
    <property type="match status" value="1"/>
</dbReference>
<dbReference type="Pfam" id="PF24951">
    <property type="entry name" value="LisH_PAC1"/>
    <property type="match status" value="1"/>
</dbReference>
<dbReference type="Pfam" id="PF00400">
    <property type="entry name" value="WD40"/>
    <property type="match status" value="7"/>
</dbReference>
<dbReference type="PIRSF" id="PIRSF037647">
    <property type="entry name" value="Dynein_regulator_Lis1"/>
    <property type="match status" value="1"/>
</dbReference>
<dbReference type="PRINTS" id="PR00320">
    <property type="entry name" value="GPROTEINBRPT"/>
</dbReference>
<dbReference type="SMART" id="SM00320">
    <property type="entry name" value="WD40"/>
    <property type="match status" value="7"/>
</dbReference>
<dbReference type="SUPFAM" id="SSF109925">
    <property type="entry name" value="Lissencephaly-1 protein (Lis-1, PAF-AH alpha) N-terminal domain"/>
    <property type="match status" value="1"/>
</dbReference>
<dbReference type="SUPFAM" id="SSF50978">
    <property type="entry name" value="WD40 repeat-like"/>
    <property type="match status" value="1"/>
</dbReference>
<dbReference type="PROSITE" id="PS50896">
    <property type="entry name" value="LISH"/>
    <property type="match status" value="1"/>
</dbReference>
<dbReference type="PROSITE" id="PS00678">
    <property type="entry name" value="WD_REPEATS_1"/>
    <property type="match status" value="4"/>
</dbReference>
<dbReference type="PROSITE" id="PS50082">
    <property type="entry name" value="WD_REPEATS_2"/>
    <property type="match status" value="7"/>
</dbReference>
<dbReference type="PROSITE" id="PS50294">
    <property type="entry name" value="WD_REPEATS_REGION"/>
    <property type="match status" value="1"/>
</dbReference>
<name>LIS1_CRYNB</name>
<evidence type="ECO:0000255" key="1">
    <source>
        <dbReference type="HAMAP-Rule" id="MF_03141"/>
    </source>
</evidence>
<feature type="chain" id="PRO_0000410334" description="Nuclear distribution protein PAC1">
    <location>
        <begin position="1"/>
        <end position="433"/>
    </location>
</feature>
<feature type="domain" description="LisH" evidence="1">
    <location>
        <begin position="8"/>
        <end position="40"/>
    </location>
</feature>
<feature type="repeat" description="WD 1">
    <location>
        <begin position="103"/>
        <end position="144"/>
    </location>
</feature>
<feature type="repeat" description="WD 2">
    <location>
        <begin position="146"/>
        <end position="184"/>
    </location>
</feature>
<feature type="repeat" description="WD 3">
    <location>
        <begin position="188"/>
        <end position="227"/>
    </location>
</feature>
<feature type="repeat" description="WD 4">
    <location>
        <begin position="230"/>
        <end position="269"/>
    </location>
</feature>
<feature type="repeat" description="WD 5">
    <location>
        <begin position="272"/>
        <end position="336"/>
    </location>
</feature>
<feature type="repeat" description="WD 6">
    <location>
        <begin position="339"/>
        <end position="378"/>
    </location>
</feature>
<feature type="repeat" description="WD 7">
    <location>
        <begin position="381"/>
        <end position="429"/>
    </location>
</feature>
<feature type="coiled-coil region" evidence="1">
    <location>
        <begin position="57"/>
        <end position="84"/>
    </location>
</feature>
<sequence length="433" mass="47598">MAALSDRQKDELHRAMLAYLHAAGMHNAYAALQHDAALADVDPRDRAVGLLEKKWTSVIRLQKKVIDLENRNAALLAELAAAARPAAPGPFLPRPPPRHTLASHRAPVTRLAFHPTWTLLASASEDATVKLWDWEAGDMERTLKGHTKAVMDVDFDPRGGLMATCSSDLTLKLWDTANQYTNVKTLHGHDHSVSSVRFMPDGETLVSASRDKTIRVWQVSSGYCIKTFSGHAEWVREAVPSEDGRWLVSASNDQTSRIWDFSTGETKMELRGHEHVVECAVFAPVNAYPAIRELAGLKPPAPRDTRAKSPGVYAATGSRDKTIKLWDALSGQCLRTLVGHDNWIRALVFHPSGKYLLSASDDKTIKVWDLANGRCTKTIEAHSHFVTSMTWGRAVGASGGIEKVNGDASSKEPRRINVLATGSVDQTIKVWTP</sequence>
<proteinExistence type="inferred from homology"/>
<accession>P0CS43</accession>
<accession>Q55TS8</accession>
<accession>Q5KIK9</accession>
<gene>
    <name evidence="1" type="primary">PAC1</name>
    <name evidence="1" type="synonym">LIS1</name>
    <name type="ordered locus">CNBD3750</name>
</gene>
<reference key="1">
    <citation type="journal article" date="2005" name="Science">
        <title>The genome of the basidiomycetous yeast and human pathogen Cryptococcus neoformans.</title>
        <authorList>
            <person name="Loftus B.J."/>
            <person name="Fung E."/>
            <person name="Roncaglia P."/>
            <person name="Rowley D."/>
            <person name="Amedeo P."/>
            <person name="Bruno D."/>
            <person name="Vamathevan J."/>
            <person name="Miranda M."/>
            <person name="Anderson I.J."/>
            <person name="Fraser J.A."/>
            <person name="Allen J.E."/>
            <person name="Bosdet I.E."/>
            <person name="Brent M.R."/>
            <person name="Chiu R."/>
            <person name="Doering T.L."/>
            <person name="Donlin M.J."/>
            <person name="D'Souza C.A."/>
            <person name="Fox D.S."/>
            <person name="Grinberg V."/>
            <person name="Fu J."/>
            <person name="Fukushima M."/>
            <person name="Haas B.J."/>
            <person name="Huang J.C."/>
            <person name="Janbon G."/>
            <person name="Jones S.J.M."/>
            <person name="Koo H.L."/>
            <person name="Krzywinski M.I."/>
            <person name="Kwon-Chung K.J."/>
            <person name="Lengeler K.B."/>
            <person name="Maiti R."/>
            <person name="Marra M.A."/>
            <person name="Marra R.E."/>
            <person name="Mathewson C.A."/>
            <person name="Mitchell T.G."/>
            <person name="Pertea M."/>
            <person name="Riggs F.R."/>
            <person name="Salzberg S.L."/>
            <person name="Schein J.E."/>
            <person name="Shvartsbeyn A."/>
            <person name="Shin H."/>
            <person name="Shumway M."/>
            <person name="Specht C.A."/>
            <person name="Suh B.B."/>
            <person name="Tenney A."/>
            <person name="Utterback T.R."/>
            <person name="Wickes B.L."/>
            <person name="Wortman J.R."/>
            <person name="Wye N.H."/>
            <person name="Kronstad J.W."/>
            <person name="Lodge J.K."/>
            <person name="Heitman J."/>
            <person name="Davis R.W."/>
            <person name="Fraser C.M."/>
            <person name="Hyman R.W."/>
        </authorList>
    </citation>
    <scope>NUCLEOTIDE SEQUENCE [LARGE SCALE GENOMIC DNA]</scope>
    <source>
        <strain>B-3501A</strain>
    </source>
</reference>
<keyword id="KW-0131">Cell cycle</keyword>
<keyword id="KW-0132">Cell division</keyword>
<keyword id="KW-0175">Coiled coil</keyword>
<keyword id="KW-0963">Cytoplasm</keyword>
<keyword id="KW-0206">Cytoskeleton</keyword>
<keyword id="KW-0493">Microtubule</keyword>
<keyword id="KW-0498">Mitosis</keyword>
<keyword id="KW-0677">Repeat</keyword>
<keyword id="KW-0813">Transport</keyword>
<keyword id="KW-0853">WD repeat</keyword>